<sequence>MVNTMKTKLLCVLLLCGAVFSLPRQETYRQLARGSRAYGVACRDEKTQMIYQQQESWLRPEVRSKRVEHCRCDRGLAQCHTVPVKSCSELRCFNGGTCWQAASFSDFVCQCPKGYTGKQCEVDTHATCYKDQGVTYRGTWSTSESGAQCINWNSNLLTRRTYNGRRSDAITLGLGNHNYCRNPDNNSKPWCYVIKASKFILEFCSVPVCSKATCGLRKYKEPQLHSTGGLFTDITSHPWQAAIFAQNRRSSGERFLCGGILISSCWVLTAAHCFQERYPPQHLRVVLGRTYRVKPGKEEQTFEVEKCIVHEEFDDDTYNNDIALLQLKSGSPQCAQESDSVRAICLPEANLQLPDWTECELSGYGKHKSSSPFYSEQLKEGHVRLYPSSRCTSKFLFNKTVTNNMLCAGDTRSGEIYPNVHDACQGDSGGPLVCMNDNHMTLLGIISWGVGCGEKDIPGVYTKVTNYLGWIRDNMRP</sequence>
<protein>
    <recommendedName>
        <fullName>Salivary plasminogen activator alpha 2</fullName>
        <ecNumber>3.4.21.68</ecNumber>
    </recommendedName>
    <alternativeName>
        <fullName>BAT-PA</fullName>
    </alternativeName>
    <alternativeName>
        <fullName>DSPA alpha-2</fullName>
    </alternativeName>
    <alternativeName>
        <fullName>T-plasminogen activator</fullName>
    </alternativeName>
</protein>
<dbReference type="EC" id="3.4.21.68"/>
<dbReference type="EMBL" id="M63988">
    <property type="protein sequence ID" value="AAA31593.1"/>
    <property type="molecule type" value="mRNA"/>
</dbReference>
<dbReference type="EMBL" id="J05082">
    <property type="protein sequence ID" value="AAA31596.1"/>
    <property type="molecule type" value="mRNA"/>
</dbReference>
<dbReference type="PIR" id="A34369">
    <property type="entry name" value="A34369"/>
</dbReference>
<dbReference type="PIR" id="JS0598">
    <property type="entry name" value="JS0598"/>
</dbReference>
<dbReference type="SMR" id="P15638"/>
<dbReference type="MEROPS" id="S01.239"/>
<dbReference type="GO" id="GO:0005615">
    <property type="term" value="C:extracellular space"/>
    <property type="evidence" value="ECO:0007669"/>
    <property type="project" value="TreeGrafter"/>
</dbReference>
<dbReference type="GO" id="GO:0004252">
    <property type="term" value="F:serine-type endopeptidase activity"/>
    <property type="evidence" value="ECO:0007669"/>
    <property type="project" value="UniProtKB-EC"/>
</dbReference>
<dbReference type="GO" id="GO:0031639">
    <property type="term" value="P:plasminogen activation"/>
    <property type="evidence" value="ECO:0007669"/>
    <property type="project" value="InterPro"/>
</dbReference>
<dbReference type="GO" id="GO:0048008">
    <property type="term" value="P:platelet-derived growth factor receptor signaling pathway"/>
    <property type="evidence" value="ECO:0007669"/>
    <property type="project" value="TreeGrafter"/>
</dbReference>
<dbReference type="GO" id="GO:0014909">
    <property type="term" value="P:smooth muscle cell migration"/>
    <property type="evidence" value="ECO:0007669"/>
    <property type="project" value="TreeGrafter"/>
</dbReference>
<dbReference type="CDD" id="cd00054">
    <property type="entry name" value="EGF_CA"/>
    <property type="match status" value="1"/>
</dbReference>
<dbReference type="CDD" id="cd00061">
    <property type="entry name" value="FN1"/>
    <property type="match status" value="1"/>
</dbReference>
<dbReference type="CDD" id="cd00108">
    <property type="entry name" value="KR"/>
    <property type="match status" value="1"/>
</dbReference>
<dbReference type="CDD" id="cd00190">
    <property type="entry name" value="Tryp_SPc"/>
    <property type="match status" value="1"/>
</dbReference>
<dbReference type="FunFam" id="2.40.10.10:FF:000054">
    <property type="entry name" value="Complement C1r subcomponent"/>
    <property type="match status" value="1"/>
</dbReference>
<dbReference type="FunFam" id="2.10.70.10:FF:000043">
    <property type="entry name" value="Plasminogen activator"/>
    <property type="match status" value="1"/>
</dbReference>
<dbReference type="FunFam" id="2.10.25.10:FF:000483">
    <property type="entry name" value="Tissue-type plasminogen activator"/>
    <property type="match status" value="1"/>
</dbReference>
<dbReference type="FunFam" id="2.40.10.10:FF:000058">
    <property type="entry name" value="Tissue-type plasminogen activator"/>
    <property type="match status" value="1"/>
</dbReference>
<dbReference type="FunFam" id="2.40.20.10:FF:000001">
    <property type="entry name" value="Urokinase-type plasminogen activator"/>
    <property type="match status" value="1"/>
</dbReference>
<dbReference type="Gene3D" id="2.10.70.10">
    <property type="entry name" value="Complement Module, domain 1"/>
    <property type="match status" value="1"/>
</dbReference>
<dbReference type="Gene3D" id="2.10.25.10">
    <property type="entry name" value="Laminin"/>
    <property type="match status" value="1"/>
</dbReference>
<dbReference type="Gene3D" id="2.40.20.10">
    <property type="entry name" value="Plasminogen Kringle 4"/>
    <property type="match status" value="1"/>
</dbReference>
<dbReference type="Gene3D" id="2.40.10.10">
    <property type="entry name" value="Trypsin-like serine proteases"/>
    <property type="match status" value="2"/>
</dbReference>
<dbReference type="InterPro" id="IPR000742">
    <property type="entry name" value="EGF-like_dom"/>
</dbReference>
<dbReference type="InterPro" id="IPR000083">
    <property type="entry name" value="Fibronectin_type1"/>
</dbReference>
<dbReference type="InterPro" id="IPR000001">
    <property type="entry name" value="Kringle"/>
</dbReference>
<dbReference type="InterPro" id="IPR013806">
    <property type="entry name" value="Kringle-like"/>
</dbReference>
<dbReference type="InterPro" id="IPR018056">
    <property type="entry name" value="Kringle_CS"/>
</dbReference>
<dbReference type="InterPro" id="IPR038178">
    <property type="entry name" value="Kringle_sf"/>
</dbReference>
<dbReference type="InterPro" id="IPR009003">
    <property type="entry name" value="Peptidase_S1_PA"/>
</dbReference>
<dbReference type="InterPro" id="IPR043504">
    <property type="entry name" value="Peptidase_S1_PA_chymotrypsin"/>
</dbReference>
<dbReference type="InterPro" id="IPR001314">
    <property type="entry name" value="Peptidase_S1A"/>
</dbReference>
<dbReference type="InterPro" id="IPR050127">
    <property type="entry name" value="Serine_Proteases_S1"/>
</dbReference>
<dbReference type="InterPro" id="IPR026280">
    <property type="entry name" value="Tissue_plasm_act"/>
</dbReference>
<dbReference type="InterPro" id="IPR001254">
    <property type="entry name" value="Trypsin_dom"/>
</dbReference>
<dbReference type="InterPro" id="IPR018114">
    <property type="entry name" value="TRYPSIN_HIS"/>
</dbReference>
<dbReference type="InterPro" id="IPR033116">
    <property type="entry name" value="TRYPSIN_SER"/>
</dbReference>
<dbReference type="PANTHER" id="PTHR24264:SF42">
    <property type="entry name" value="TISSUE-TYPE PLASMINOGEN ACTIVATOR"/>
    <property type="match status" value="1"/>
</dbReference>
<dbReference type="PANTHER" id="PTHR24264">
    <property type="entry name" value="TRYPSIN-RELATED"/>
    <property type="match status" value="1"/>
</dbReference>
<dbReference type="Pfam" id="PF00008">
    <property type="entry name" value="EGF"/>
    <property type="match status" value="1"/>
</dbReference>
<dbReference type="Pfam" id="PF00039">
    <property type="entry name" value="fn1"/>
    <property type="match status" value="1"/>
</dbReference>
<dbReference type="Pfam" id="PF00051">
    <property type="entry name" value="Kringle"/>
    <property type="match status" value="1"/>
</dbReference>
<dbReference type="Pfam" id="PF00089">
    <property type="entry name" value="Trypsin"/>
    <property type="match status" value="1"/>
</dbReference>
<dbReference type="PIRSF" id="PIRSF001145">
    <property type="entry name" value="Tissue_plasm_act"/>
    <property type="match status" value="1"/>
</dbReference>
<dbReference type="PRINTS" id="PR00722">
    <property type="entry name" value="CHYMOTRYPSIN"/>
</dbReference>
<dbReference type="PRINTS" id="PR00018">
    <property type="entry name" value="KRINGLE"/>
</dbReference>
<dbReference type="SMART" id="SM00181">
    <property type="entry name" value="EGF"/>
    <property type="match status" value="1"/>
</dbReference>
<dbReference type="SMART" id="SM00058">
    <property type="entry name" value="FN1"/>
    <property type="match status" value="1"/>
</dbReference>
<dbReference type="SMART" id="SM00130">
    <property type="entry name" value="KR"/>
    <property type="match status" value="1"/>
</dbReference>
<dbReference type="SMART" id="SM00020">
    <property type="entry name" value="Tryp_SPc"/>
    <property type="match status" value="1"/>
</dbReference>
<dbReference type="SUPFAM" id="SSF57603">
    <property type="entry name" value="FnI-like domain"/>
    <property type="match status" value="1"/>
</dbReference>
<dbReference type="SUPFAM" id="SSF57440">
    <property type="entry name" value="Kringle-like"/>
    <property type="match status" value="1"/>
</dbReference>
<dbReference type="SUPFAM" id="SSF50494">
    <property type="entry name" value="Trypsin-like serine proteases"/>
    <property type="match status" value="1"/>
</dbReference>
<dbReference type="PROSITE" id="PS00022">
    <property type="entry name" value="EGF_1"/>
    <property type="match status" value="1"/>
</dbReference>
<dbReference type="PROSITE" id="PS01186">
    <property type="entry name" value="EGF_2"/>
    <property type="match status" value="1"/>
</dbReference>
<dbReference type="PROSITE" id="PS50026">
    <property type="entry name" value="EGF_3"/>
    <property type="match status" value="1"/>
</dbReference>
<dbReference type="PROSITE" id="PS01253">
    <property type="entry name" value="FN1_1"/>
    <property type="match status" value="1"/>
</dbReference>
<dbReference type="PROSITE" id="PS51091">
    <property type="entry name" value="FN1_2"/>
    <property type="match status" value="1"/>
</dbReference>
<dbReference type="PROSITE" id="PS00021">
    <property type="entry name" value="KRINGLE_1"/>
    <property type="match status" value="1"/>
</dbReference>
<dbReference type="PROSITE" id="PS50070">
    <property type="entry name" value="KRINGLE_2"/>
    <property type="match status" value="1"/>
</dbReference>
<dbReference type="PROSITE" id="PS50240">
    <property type="entry name" value="TRYPSIN_DOM"/>
    <property type="match status" value="1"/>
</dbReference>
<dbReference type="PROSITE" id="PS00134">
    <property type="entry name" value="TRYPSIN_HIS"/>
    <property type="match status" value="1"/>
</dbReference>
<dbReference type="PROSITE" id="PS00135">
    <property type="entry name" value="TRYPSIN_SER"/>
    <property type="match status" value="1"/>
</dbReference>
<name>URT2_DESRO</name>
<comment type="function">
    <text>Probably essential to support the feeding habits of this exclusively haematophagous animal. Probable potent thrombolytic agent.</text>
</comment>
<comment type="catalytic activity">
    <reaction>
        <text>Specific cleavage of Arg-|-Val bond in plasminogen to form plasmin.</text>
        <dbReference type="EC" id="3.4.21.68"/>
    </reaction>
</comment>
<comment type="activity regulation">
    <text>Activity toward plasminogen is stimulated in the presence of fibrin I.</text>
</comment>
<comment type="subunit">
    <text>Monomer.</text>
</comment>
<comment type="subcellular location">
    <subcellularLocation>
        <location>Secreted</location>
    </subcellularLocation>
</comment>
<comment type="domain">
    <text>The fibronectin type-I domain mediates binding to fibrin, and the kringle domain apparently mediates fibrin-induced stimulation of activity.</text>
</comment>
<comment type="similarity">
    <text evidence="5">Belongs to the peptidase S1 family.</text>
</comment>
<evidence type="ECO:0000250" key="1"/>
<evidence type="ECO:0000255" key="2"/>
<evidence type="ECO:0000255" key="3">
    <source>
        <dbReference type="PROSITE-ProRule" id="PRU00076"/>
    </source>
</evidence>
<evidence type="ECO:0000255" key="4">
    <source>
        <dbReference type="PROSITE-ProRule" id="PRU00121"/>
    </source>
</evidence>
<evidence type="ECO:0000255" key="5">
    <source>
        <dbReference type="PROSITE-ProRule" id="PRU00274"/>
    </source>
</evidence>
<evidence type="ECO:0000255" key="6">
    <source>
        <dbReference type="PROSITE-ProRule" id="PRU00478"/>
    </source>
</evidence>
<evidence type="ECO:0000305" key="7"/>
<reference key="1">
    <citation type="journal article" date="1991" name="Gene">
        <title>The plasminogen activator family from the salivary gland of the vampire bat Desmodus rotundus: cloning and expression.</title>
        <authorList>
            <person name="Kraetzschmar J."/>
            <person name="Haendler B."/>
            <person name="Langer G."/>
            <person name="Boidol W."/>
            <person name="Bringmann P."/>
            <person name="Alagon A."/>
            <person name="Donner P."/>
            <person name="Schleuning W.-D."/>
        </authorList>
    </citation>
    <scope>NUCLEOTIDE SEQUENCE [MRNA]</scope>
    <source>
        <tissue>Salivary gland</tissue>
    </source>
</reference>
<reference key="2">
    <citation type="journal article" date="1989" name="J. Biol. Chem.">
        <title>Isolation, characterization, and cDNA cloning of a vampire bat salivary plasminogen activator.</title>
        <authorList>
            <person name="Gardell S.J."/>
            <person name="Duong L.T."/>
            <person name="Diehl R.E."/>
            <person name="York J.D."/>
            <person name="Hare T.R."/>
            <person name="Register R.B."/>
            <person name="Jacobs J.W."/>
            <person name="Dixon R.A.F."/>
            <person name="Friedman P.A."/>
        </authorList>
    </citation>
    <scope>NUCLEOTIDE SEQUENCE [MRNA]</scope>
    <scope>PARTIAL PROTEIN SEQUENCE</scope>
    <source>
        <tissue>Salivary gland</tissue>
    </source>
</reference>
<reference key="3">
    <citation type="journal article" date="1992" name="Ann. N. Y. Acad. Sci.">
        <title>Plasminogen activators from the saliva of Desmodus rotundus (common vampire bat): unique fibrin specificity.</title>
        <authorList>
            <person name="Schleuning W.-D."/>
            <person name="Alagon A."/>
            <person name="Boidol W."/>
            <person name="Bringmann P."/>
            <person name="Petri T."/>
            <person name="Kraetzschmar J."/>
            <person name="Haendler B."/>
            <person name="Langer G."/>
            <person name="Baldus B."/>
            <person name="Witt W."/>
            <person name="Donner P."/>
        </authorList>
    </citation>
    <scope>CHARACTERIZATION</scope>
</reference>
<proteinExistence type="evidence at protein level"/>
<feature type="signal peptide" evidence="2">
    <location>
        <begin position="1"/>
        <end position="36"/>
    </location>
</feature>
<feature type="chain" id="PRO_0000028341" description="Salivary plasminogen activator alpha 2">
    <location>
        <begin position="37"/>
        <end position="477"/>
    </location>
</feature>
<feature type="domain" description="Fibronectin type-I" evidence="6">
    <location>
        <begin position="40"/>
        <end position="82"/>
    </location>
</feature>
<feature type="domain" description="EGF-like" evidence="3">
    <location>
        <begin position="83"/>
        <end position="121"/>
    </location>
</feature>
<feature type="domain" description="Kringle" evidence="4">
    <location>
        <begin position="128"/>
        <end position="209"/>
    </location>
</feature>
<feature type="domain" description="Peptidase S1" evidence="5">
    <location>
        <begin position="226"/>
        <end position="476"/>
    </location>
</feature>
<feature type="active site" description="Charge relay system" evidence="1">
    <location>
        <position position="272"/>
    </location>
</feature>
<feature type="active site" description="Charge relay system" evidence="1">
    <location>
        <position position="321"/>
    </location>
</feature>
<feature type="active site" description="Charge relay system" evidence="1">
    <location>
        <position position="428"/>
    </location>
</feature>
<feature type="glycosylation site" description="N-linked (GlcNAc...) asparagine" evidence="2">
    <location>
        <position position="185"/>
    </location>
</feature>
<feature type="glycosylation site" description="N-linked (GlcNAc...) asparagine" evidence="2">
    <location>
        <position position="398"/>
    </location>
</feature>
<feature type="disulfide bond" evidence="1">
    <location>
        <begin position="42"/>
        <end position="72"/>
    </location>
</feature>
<feature type="disulfide bond" evidence="1">
    <location>
        <begin position="70"/>
        <end position="79"/>
    </location>
</feature>
<feature type="disulfide bond" evidence="1">
    <location>
        <begin position="87"/>
        <end position="98"/>
    </location>
</feature>
<feature type="disulfide bond" evidence="1">
    <location>
        <begin position="92"/>
        <end position="109"/>
    </location>
</feature>
<feature type="disulfide bond" evidence="1">
    <location>
        <begin position="111"/>
        <end position="120"/>
    </location>
</feature>
<feature type="disulfide bond" evidence="1">
    <location>
        <begin position="128"/>
        <end position="209"/>
    </location>
</feature>
<feature type="disulfide bond" evidence="1">
    <location>
        <begin position="149"/>
        <end position="191"/>
    </location>
</feature>
<feature type="disulfide bond" evidence="1">
    <location>
        <begin position="180"/>
        <end position="204"/>
    </location>
</feature>
<feature type="disulfide bond" evidence="1">
    <location>
        <begin position="214"/>
        <end position="345"/>
    </location>
</feature>
<feature type="disulfide bond" evidence="1">
    <location>
        <begin position="257"/>
        <end position="273"/>
    </location>
</feature>
<feature type="disulfide bond" evidence="1">
    <location>
        <begin position="265"/>
        <end position="334"/>
    </location>
</feature>
<feature type="disulfide bond" evidence="1">
    <location>
        <begin position="359"/>
        <end position="434"/>
    </location>
</feature>
<feature type="disulfide bond" evidence="1">
    <location>
        <begin position="391"/>
        <end position="407"/>
    </location>
</feature>
<feature type="disulfide bond" evidence="1">
    <location>
        <begin position="424"/>
        <end position="452"/>
    </location>
</feature>
<feature type="sequence conflict" description="In Ref. 2; AAA31596." evidence="7" ref="2">
    <original>N</original>
    <variation>K</variation>
    <location>
        <position position="403"/>
    </location>
</feature>
<feature type="sequence conflict" description="In Ref. 2; AAA31596." evidence="7" ref="2">
    <original>Y</original>
    <variation>H</variation>
    <location>
        <position position="417"/>
    </location>
</feature>
<feature type="sequence conflict" description="In Ref. 2; AAA31596." evidence="7" ref="2">
    <original>M</original>
    <variation>R</variation>
    <location>
        <position position="435"/>
    </location>
</feature>
<keyword id="KW-0903">Direct protein sequencing</keyword>
<keyword id="KW-1015">Disulfide bond</keyword>
<keyword id="KW-0245">EGF-like domain</keyword>
<keyword id="KW-0325">Glycoprotein</keyword>
<keyword id="KW-0378">Hydrolase</keyword>
<keyword id="KW-0420">Kringle</keyword>
<keyword id="KW-0617">Plasminogen activation</keyword>
<keyword id="KW-0645">Protease</keyword>
<keyword id="KW-0964">Secreted</keyword>
<keyword id="KW-0720">Serine protease</keyword>
<keyword id="KW-0732">Signal</keyword>
<accession>P15638</accession>
<organism>
    <name type="scientific">Desmodus rotundus</name>
    <name type="common">Vampire bat</name>
    <dbReference type="NCBI Taxonomy" id="9430"/>
    <lineage>
        <taxon>Eukaryota</taxon>
        <taxon>Metazoa</taxon>
        <taxon>Chordata</taxon>
        <taxon>Craniata</taxon>
        <taxon>Vertebrata</taxon>
        <taxon>Euteleostomi</taxon>
        <taxon>Mammalia</taxon>
        <taxon>Eutheria</taxon>
        <taxon>Laurasiatheria</taxon>
        <taxon>Chiroptera</taxon>
        <taxon>Yangochiroptera</taxon>
        <taxon>Phyllostomidae</taxon>
        <taxon>Desmodontinae</taxon>
        <taxon>Desmodus</taxon>
    </lineage>
</organism>